<name>SYR_HAMD5</name>
<keyword id="KW-0030">Aminoacyl-tRNA synthetase</keyword>
<keyword id="KW-0067">ATP-binding</keyword>
<keyword id="KW-0963">Cytoplasm</keyword>
<keyword id="KW-0436">Ligase</keyword>
<keyword id="KW-0547">Nucleotide-binding</keyword>
<keyword id="KW-0648">Protein biosynthesis</keyword>
<evidence type="ECO:0000255" key="1">
    <source>
        <dbReference type="HAMAP-Rule" id="MF_00123"/>
    </source>
</evidence>
<accession>C4K487</accession>
<reference key="1">
    <citation type="journal article" date="2009" name="Proc. Natl. Acad. Sci. U.S.A.">
        <title>Hamiltonella defensa, genome evolution of protective bacterial endosymbiont from pathogenic ancestors.</title>
        <authorList>
            <person name="Degnan P.H."/>
            <person name="Yu Y."/>
            <person name="Sisneros N."/>
            <person name="Wing R.A."/>
            <person name="Moran N.A."/>
        </authorList>
    </citation>
    <scope>NUCLEOTIDE SEQUENCE [LARGE SCALE GENOMIC DNA]</scope>
    <source>
        <strain>5AT</strain>
    </source>
</reference>
<gene>
    <name evidence="1" type="primary">argS</name>
    <name type="ordered locus">HDEF_0639</name>
</gene>
<comment type="catalytic activity">
    <reaction evidence="1">
        <text>tRNA(Arg) + L-arginine + ATP = L-arginyl-tRNA(Arg) + AMP + diphosphate</text>
        <dbReference type="Rhea" id="RHEA:20301"/>
        <dbReference type="Rhea" id="RHEA-COMP:9658"/>
        <dbReference type="Rhea" id="RHEA-COMP:9673"/>
        <dbReference type="ChEBI" id="CHEBI:30616"/>
        <dbReference type="ChEBI" id="CHEBI:32682"/>
        <dbReference type="ChEBI" id="CHEBI:33019"/>
        <dbReference type="ChEBI" id="CHEBI:78442"/>
        <dbReference type="ChEBI" id="CHEBI:78513"/>
        <dbReference type="ChEBI" id="CHEBI:456215"/>
        <dbReference type="EC" id="6.1.1.19"/>
    </reaction>
</comment>
<comment type="subunit">
    <text evidence="1">Monomer.</text>
</comment>
<comment type="subcellular location">
    <subcellularLocation>
        <location evidence="1">Cytoplasm</location>
    </subcellularLocation>
</comment>
<comment type="similarity">
    <text evidence="1">Belongs to the class-I aminoacyl-tRNA synthetase family.</text>
</comment>
<sequence length="576" mass="65553">MNIQLFLSDRIRHALIMAGAPDDSDAQLHPSTKAQFGDYQANGVMSAAKKQRIPPRELAERVLEHLDLSDIAKKVEIAGPGFINIFLNEQWISQKIESVFIGPKLGLTPVTPQRIVIDYSAPNVAKEMHVGHLRSTIIGDAMARTLSFLGHHVIRANHIGDWGTQFGMLIAYLEKIQHDHALEMVLSDLEHFYREAKKHYDEDEIFAQRARDYVVKLQSGDPYCREMWRKLVDITMTQNHLSYERLKVTLTPEDMMGESLYNDMLPNIVEDLIAKGVAVKDQGSVLVFLEEYQNKIGEPMGVVIQKKDGGYLYATTDIACVKYRCETLKADRILYYIDSRQNQHLAQVWTITRLAGYVPESVSLEHHMFGMMLGKDGKPFKTRTGGTVKLSDLLDEAVERAGQLIRGKNPDLNETDLNNLIQAVAIGAVKYADLSKNRTTDYIFDWDRMLSFEGNTAPYIQYAYSRVTSLFKKSGLDEKKIMSPVIIQEEKERSLAILLLQFEEMISTVARDGTPHLMCSYLYDLATRFSIFYEHCPILNAKNEQIRQSRLKLAWLTAKTLKLGLKNLGIETVERM</sequence>
<feature type="chain" id="PRO_1000203098" description="Arginine--tRNA ligase">
    <location>
        <begin position="1"/>
        <end position="576"/>
    </location>
</feature>
<feature type="short sequence motif" description="'HIGH' region">
    <location>
        <begin position="122"/>
        <end position="132"/>
    </location>
</feature>
<proteinExistence type="inferred from homology"/>
<dbReference type="EC" id="6.1.1.19" evidence="1"/>
<dbReference type="EMBL" id="CP001277">
    <property type="protein sequence ID" value="ACQ67380.1"/>
    <property type="molecule type" value="Genomic_DNA"/>
</dbReference>
<dbReference type="RefSeq" id="WP_015873201.1">
    <property type="nucleotide sequence ID" value="NC_012751.1"/>
</dbReference>
<dbReference type="SMR" id="C4K487"/>
<dbReference type="STRING" id="572265.HDEF_0639"/>
<dbReference type="GeneID" id="66260508"/>
<dbReference type="KEGG" id="hde:HDEF_0639"/>
<dbReference type="eggNOG" id="COG0018">
    <property type="taxonomic scope" value="Bacteria"/>
</dbReference>
<dbReference type="HOGENOM" id="CLU_006406_5_1_6"/>
<dbReference type="Proteomes" id="UP000002334">
    <property type="component" value="Chromosome"/>
</dbReference>
<dbReference type="GO" id="GO:0005737">
    <property type="term" value="C:cytoplasm"/>
    <property type="evidence" value="ECO:0007669"/>
    <property type="project" value="UniProtKB-SubCell"/>
</dbReference>
<dbReference type="GO" id="GO:0004814">
    <property type="term" value="F:arginine-tRNA ligase activity"/>
    <property type="evidence" value="ECO:0007669"/>
    <property type="project" value="UniProtKB-UniRule"/>
</dbReference>
<dbReference type="GO" id="GO:0005524">
    <property type="term" value="F:ATP binding"/>
    <property type="evidence" value="ECO:0007669"/>
    <property type="project" value="UniProtKB-UniRule"/>
</dbReference>
<dbReference type="GO" id="GO:0006420">
    <property type="term" value="P:arginyl-tRNA aminoacylation"/>
    <property type="evidence" value="ECO:0007669"/>
    <property type="project" value="UniProtKB-UniRule"/>
</dbReference>
<dbReference type="CDD" id="cd07956">
    <property type="entry name" value="Anticodon_Ia_Arg"/>
    <property type="match status" value="1"/>
</dbReference>
<dbReference type="CDD" id="cd00671">
    <property type="entry name" value="ArgRS_core"/>
    <property type="match status" value="1"/>
</dbReference>
<dbReference type="FunFam" id="1.10.730.10:FF:000001">
    <property type="entry name" value="Arginine--tRNA ligase"/>
    <property type="match status" value="1"/>
</dbReference>
<dbReference type="FunFam" id="3.40.50.620:FF:000030">
    <property type="entry name" value="Arginine--tRNA ligase"/>
    <property type="match status" value="1"/>
</dbReference>
<dbReference type="Gene3D" id="3.30.1360.70">
    <property type="entry name" value="Arginyl tRNA synthetase N-terminal domain"/>
    <property type="match status" value="1"/>
</dbReference>
<dbReference type="Gene3D" id="3.40.50.620">
    <property type="entry name" value="HUPs"/>
    <property type="match status" value="1"/>
</dbReference>
<dbReference type="Gene3D" id="1.10.730.10">
    <property type="entry name" value="Isoleucyl-tRNA Synthetase, Domain 1"/>
    <property type="match status" value="1"/>
</dbReference>
<dbReference type="HAMAP" id="MF_00123">
    <property type="entry name" value="Arg_tRNA_synth"/>
    <property type="match status" value="1"/>
</dbReference>
<dbReference type="InterPro" id="IPR001412">
    <property type="entry name" value="aa-tRNA-synth_I_CS"/>
</dbReference>
<dbReference type="InterPro" id="IPR001278">
    <property type="entry name" value="Arg-tRNA-ligase"/>
</dbReference>
<dbReference type="InterPro" id="IPR005148">
    <property type="entry name" value="Arg-tRNA-synth_N"/>
</dbReference>
<dbReference type="InterPro" id="IPR036695">
    <property type="entry name" value="Arg-tRNA-synth_N_sf"/>
</dbReference>
<dbReference type="InterPro" id="IPR035684">
    <property type="entry name" value="ArgRS_core"/>
</dbReference>
<dbReference type="InterPro" id="IPR008909">
    <property type="entry name" value="DALR_anticod-bd"/>
</dbReference>
<dbReference type="InterPro" id="IPR014729">
    <property type="entry name" value="Rossmann-like_a/b/a_fold"/>
</dbReference>
<dbReference type="InterPro" id="IPR009080">
    <property type="entry name" value="tRNAsynth_Ia_anticodon-bd"/>
</dbReference>
<dbReference type="NCBIfam" id="TIGR00456">
    <property type="entry name" value="argS"/>
    <property type="match status" value="1"/>
</dbReference>
<dbReference type="PANTHER" id="PTHR11956:SF5">
    <property type="entry name" value="ARGININE--TRNA LIGASE, CYTOPLASMIC"/>
    <property type="match status" value="1"/>
</dbReference>
<dbReference type="PANTHER" id="PTHR11956">
    <property type="entry name" value="ARGINYL-TRNA SYNTHETASE"/>
    <property type="match status" value="1"/>
</dbReference>
<dbReference type="Pfam" id="PF03485">
    <property type="entry name" value="Arg_tRNA_synt_N"/>
    <property type="match status" value="1"/>
</dbReference>
<dbReference type="Pfam" id="PF05746">
    <property type="entry name" value="DALR_1"/>
    <property type="match status" value="1"/>
</dbReference>
<dbReference type="Pfam" id="PF00750">
    <property type="entry name" value="tRNA-synt_1d"/>
    <property type="match status" value="1"/>
</dbReference>
<dbReference type="PRINTS" id="PR01038">
    <property type="entry name" value="TRNASYNTHARG"/>
</dbReference>
<dbReference type="SMART" id="SM01016">
    <property type="entry name" value="Arg_tRNA_synt_N"/>
    <property type="match status" value="1"/>
</dbReference>
<dbReference type="SMART" id="SM00836">
    <property type="entry name" value="DALR_1"/>
    <property type="match status" value="1"/>
</dbReference>
<dbReference type="SUPFAM" id="SSF47323">
    <property type="entry name" value="Anticodon-binding domain of a subclass of class I aminoacyl-tRNA synthetases"/>
    <property type="match status" value="1"/>
</dbReference>
<dbReference type="SUPFAM" id="SSF55190">
    <property type="entry name" value="Arginyl-tRNA synthetase (ArgRS), N-terminal 'additional' domain"/>
    <property type="match status" value="1"/>
</dbReference>
<dbReference type="SUPFAM" id="SSF52374">
    <property type="entry name" value="Nucleotidylyl transferase"/>
    <property type="match status" value="1"/>
</dbReference>
<dbReference type="PROSITE" id="PS00178">
    <property type="entry name" value="AA_TRNA_LIGASE_I"/>
    <property type="match status" value="1"/>
</dbReference>
<protein>
    <recommendedName>
        <fullName evidence="1">Arginine--tRNA ligase</fullName>
        <ecNumber evidence="1">6.1.1.19</ecNumber>
    </recommendedName>
    <alternativeName>
        <fullName evidence="1">Arginyl-tRNA synthetase</fullName>
        <shortName evidence="1">ArgRS</shortName>
    </alternativeName>
</protein>
<organism>
    <name type="scientific">Hamiltonella defensa subsp. Acyrthosiphon pisum (strain 5AT)</name>
    <dbReference type="NCBI Taxonomy" id="572265"/>
    <lineage>
        <taxon>Bacteria</taxon>
        <taxon>Pseudomonadati</taxon>
        <taxon>Pseudomonadota</taxon>
        <taxon>Gammaproteobacteria</taxon>
        <taxon>Enterobacterales</taxon>
        <taxon>Enterobacteriaceae</taxon>
        <taxon>aphid secondary symbionts</taxon>
        <taxon>Candidatus Hamiltonella</taxon>
    </lineage>
</organism>